<organism>
    <name type="scientific">Zea mays</name>
    <name type="common">Maize</name>
    <dbReference type="NCBI Taxonomy" id="4577"/>
    <lineage>
        <taxon>Eukaryota</taxon>
        <taxon>Viridiplantae</taxon>
        <taxon>Streptophyta</taxon>
        <taxon>Embryophyta</taxon>
        <taxon>Tracheophyta</taxon>
        <taxon>Spermatophyta</taxon>
        <taxon>Magnoliopsida</taxon>
        <taxon>Liliopsida</taxon>
        <taxon>Poales</taxon>
        <taxon>Poaceae</taxon>
        <taxon>PACMAD clade</taxon>
        <taxon>Panicoideae</taxon>
        <taxon>Andropogonodae</taxon>
        <taxon>Andropogoneae</taxon>
        <taxon>Tripsacinae</taxon>
        <taxon>Zea</taxon>
    </lineage>
</organism>
<proteinExistence type="evidence at transcript level"/>
<keyword id="KW-0150">Chloroplast</keyword>
<keyword id="KW-0378">Hydrolase</keyword>
<keyword id="KW-0479">Metal-binding</keyword>
<keyword id="KW-0934">Plastid</keyword>
<keyword id="KW-1185">Reference proteome</keyword>
<keyword id="KW-0809">Transit peptide</keyword>
<keyword id="KW-0862">Zinc</keyword>
<gene>
    <name type="primary">PYRD</name>
    <name evidence="5" type="ORF">GRMZM2G320099</name>
</gene>
<sequence>MASSLVSRPHLTQRPVRAATLASATRPRLAAGALSGRCQAQAAGDLDDAHYMRRCVELARKAAGHTSPNPMVGCVIVRDGRVVGEGFHPKAGQPHAEVFALRDAGNLAENATAYVSLEPCNHYGRTPPCTEALINAKVKEVVVGMTDPNPIVASKGIEKLQGAGISVRVGVEEALCRKLNEAYIHRMLTGKAFATLRATLSMNGIITNQIGKGADQSGGYYSQLMKEYDGVIISSDLAKMSALPLSREAGTNQPLCIIIAQGESSRLHIPSLSQEHASRAIVLADSPVTVEPAGVEVAVFRQIDLESILQLLAQRGLCSVLVDFREAGESFASLLNDFQEDKLVQKVVVEVLPFWLASDGLSNLAFGGSQSFPLKNLELRDVNGSVLLEGYV</sequence>
<feature type="transit peptide" description="Chloroplast" evidence="2">
    <location>
        <begin position="1"/>
        <end position="26"/>
    </location>
</feature>
<feature type="chain" id="PRO_0000422705" description="Riboflavin biosynthesis protein PYRD, chloroplastic">
    <location>
        <begin position="27"/>
        <end position="392"/>
    </location>
</feature>
<feature type="domain" description="CMP/dCMP-type deaminase" evidence="3">
    <location>
        <begin position="46"/>
        <end position="168"/>
    </location>
</feature>
<feature type="active site" description="Proton donor" evidence="1">
    <location>
        <position position="97"/>
    </location>
</feature>
<feature type="binding site" evidence="1">
    <location>
        <position position="95"/>
    </location>
    <ligand>
        <name>Zn(2+)</name>
        <dbReference type="ChEBI" id="CHEBI:29105"/>
        <note>catalytic</note>
    </ligand>
</feature>
<feature type="binding site" evidence="1">
    <location>
        <position position="120"/>
    </location>
    <ligand>
        <name>Zn(2+)</name>
        <dbReference type="ChEBI" id="CHEBI:29105"/>
        <note>catalytic</note>
    </ligand>
</feature>
<feature type="binding site" evidence="1">
    <location>
        <position position="129"/>
    </location>
    <ligand>
        <name>Zn(2+)</name>
        <dbReference type="ChEBI" id="CHEBI:29105"/>
        <note>catalytic</note>
    </ligand>
</feature>
<feature type="sequence conflict" description="In Ref. 2; ACF78978." evidence="5" ref="2">
    <original>A</original>
    <variation>V</variation>
    <location>
        <position position="30"/>
    </location>
</feature>
<feature type="sequence conflict" description="In Ref. 2; ACF78978." evidence="5" ref="2">
    <original>S</original>
    <variation>G</variation>
    <location>
        <position position="35"/>
    </location>
</feature>
<dbReference type="EC" id="3.5.4.26"/>
<dbReference type="EMBL" id="EU967589">
    <property type="protein sequence ID" value="ACG39707.1"/>
    <property type="molecule type" value="mRNA"/>
</dbReference>
<dbReference type="EMBL" id="BT033973">
    <property type="protein sequence ID" value="ACF78978.1"/>
    <property type="molecule type" value="mRNA"/>
</dbReference>
<dbReference type="RefSeq" id="NP_001130669.1">
    <property type="nucleotide sequence ID" value="NM_001137197.1"/>
</dbReference>
<dbReference type="SMR" id="B6TRH4"/>
<dbReference type="FunCoup" id="B6TRH4">
    <property type="interactions" value="486"/>
</dbReference>
<dbReference type="STRING" id="4577.B6TRH4"/>
<dbReference type="PaxDb" id="4577-GRMZM2G320099_P01"/>
<dbReference type="GeneID" id="100191772"/>
<dbReference type="KEGG" id="zma:100191772"/>
<dbReference type="eggNOG" id="KOG1018">
    <property type="taxonomic scope" value="Eukaryota"/>
</dbReference>
<dbReference type="HOGENOM" id="CLU_036590_2_0_1"/>
<dbReference type="InParanoid" id="B6TRH4"/>
<dbReference type="OrthoDB" id="252265at2759"/>
<dbReference type="UniPathway" id="UPA00275">
    <property type="reaction ID" value="UER00401"/>
</dbReference>
<dbReference type="Proteomes" id="UP000007305">
    <property type="component" value="Unplaced"/>
</dbReference>
<dbReference type="ExpressionAtlas" id="B6TRH4">
    <property type="expression patterns" value="baseline and differential"/>
</dbReference>
<dbReference type="GO" id="GO:0009507">
    <property type="term" value="C:chloroplast"/>
    <property type="evidence" value="ECO:0007669"/>
    <property type="project" value="UniProtKB-SubCell"/>
</dbReference>
<dbReference type="GO" id="GO:0008835">
    <property type="term" value="F:diaminohydroxyphosphoribosylaminopyrimidine deaminase activity"/>
    <property type="evidence" value="ECO:0000318"/>
    <property type="project" value="GO_Central"/>
</dbReference>
<dbReference type="GO" id="GO:0008270">
    <property type="term" value="F:zinc ion binding"/>
    <property type="evidence" value="ECO:0007669"/>
    <property type="project" value="InterPro"/>
</dbReference>
<dbReference type="GO" id="GO:0009231">
    <property type="term" value="P:riboflavin biosynthetic process"/>
    <property type="evidence" value="ECO:0007669"/>
    <property type="project" value="UniProtKB-UniPathway"/>
</dbReference>
<dbReference type="CDD" id="cd01284">
    <property type="entry name" value="Riboflavin_deaminase-reductase"/>
    <property type="match status" value="1"/>
</dbReference>
<dbReference type="FunFam" id="3.40.140.10:FF:000025">
    <property type="entry name" value="Riboflavin biosynthesis protein RibD"/>
    <property type="match status" value="1"/>
</dbReference>
<dbReference type="Gene3D" id="3.40.140.10">
    <property type="entry name" value="Cytidine Deaminase, domain 2"/>
    <property type="match status" value="1"/>
</dbReference>
<dbReference type="Gene3D" id="3.40.430.10">
    <property type="entry name" value="Dihydrofolate Reductase, subunit A"/>
    <property type="match status" value="1"/>
</dbReference>
<dbReference type="InterPro" id="IPR016192">
    <property type="entry name" value="APOBEC/CMP_deaminase_Zn-bd"/>
</dbReference>
<dbReference type="InterPro" id="IPR002125">
    <property type="entry name" value="CMP_dCMP_dom"/>
</dbReference>
<dbReference type="InterPro" id="IPR016193">
    <property type="entry name" value="Cytidine_deaminase-like"/>
</dbReference>
<dbReference type="InterPro" id="IPR024072">
    <property type="entry name" value="DHFR-like_dom_sf"/>
</dbReference>
<dbReference type="InterPro" id="IPR004794">
    <property type="entry name" value="Eubact_RibD"/>
</dbReference>
<dbReference type="NCBIfam" id="TIGR00326">
    <property type="entry name" value="eubact_ribD"/>
    <property type="match status" value="1"/>
</dbReference>
<dbReference type="PANTHER" id="PTHR11079">
    <property type="entry name" value="CYTOSINE DEAMINASE FAMILY MEMBER"/>
    <property type="match status" value="1"/>
</dbReference>
<dbReference type="PANTHER" id="PTHR11079:SF162">
    <property type="entry name" value="RIBOFLAVIN BIOSYNTHESIS PROTEIN PYRD, CHLOROPLASTIC"/>
    <property type="match status" value="1"/>
</dbReference>
<dbReference type="Pfam" id="PF00383">
    <property type="entry name" value="dCMP_cyt_deam_1"/>
    <property type="match status" value="1"/>
</dbReference>
<dbReference type="PIRSF" id="PIRSF006769">
    <property type="entry name" value="RibD"/>
    <property type="match status" value="1"/>
</dbReference>
<dbReference type="SUPFAM" id="SSF53927">
    <property type="entry name" value="Cytidine deaminase-like"/>
    <property type="match status" value="1"/>
</dbReference>
<dbReference type="SUPFAM" id="SSF53597">
    <property type="entry name" value="Dihydrofolate reductase-like"/>
    <property type="match status" value="1"/>
</dbReference>
<dbReference type="PROSITE" id="PS00903">
    <property type="entry name" value="CYT_DCMP_DEAMINASES_1"/>
    <property type="match status" value="1"/>
</dbReference>
<dbReference type="PROSITE" id="PS51747">
    <property type="entry name" value="CYT_DCMP_DEAMINASES_2"/>
    <property type="match status" value="1"/>
</dbReference>
<name>RIBD_MAIZE</name>
<evidence type="ECO:0000250" key="1"/>
<evidence type="ECO:0000255" key="2"/>
<evidence type="ECO:0000255" key="3">
    <source>
        <dbReference type="PROSITE-ProRule" id="PRU01083"/>
    </source>
</evidence>
<evidence type="ECO:0000269" key="4">
    <source>
    </source>
</evidence>
<evidence type="ECO:0000305" key="5"/>
<reference key="1">
    <citation type="journal article" date="2009" name="Plant Mol. Biol.">
        <title>Insights into corn genes derived from large-scale cDNA sequencing.</title>
        <authorList>
            <person name="Alexandrov N.N."/>
            <person name="Brover V.V."/>
            <person name="Freidin S."/>
            <person name="Troukhan M.E."/>
            <person name="Tatarinova T.V."/>
            <person name="Zhang H."/>
            <person name="Swaller T.J."/>
            <person name="Lu Y.-P."/>
            <person name="Bouck J."/>
            <person name="Flavell R.B."/>
            <person name="Feldmann K.A."/>
        </authorList>
    </citation>
    <scope>NUCLEOTIDE SEQUENCE [LARGE SCALE MRNA]</scope>
</reference>
<reference key="2">
    <citation type="journal article" date="2009" name="PLoS Genet.">
        <title>Sequencing, mapping, and analysis of 27,455 maize full-length cDNAs.</title>
        <authorList>
            <person name="Soderlund C."/>
            <person name="Descour A."/>
            <person name="Kudrna D."/>
            <person name="Bomhoff M."/>
            <person name="Boyd L."/>
            <person name="Currie J."/>
            <person name="Angelova A."/>
            <person name="Collura K."/>
            <person name="Wissotski M."/>
            <person name="Ashley E."/>
            <person name="Morrow D."/>
            <person name="Fernandes J."/>
            <person name="Walbot V."/>
            <person name="Yu Y."/>
        </authorList>
    </citation>
    <scope>NUCLEOTIDE SEQUENCE [LARGE SCALE MRNA]</scope>
    <source>
        <strain>cv. B73</strain>
    </source>
</reference>
<reference key="3">
    <citation type="journal article" date="2013" name="Plant Physiol.">
        <title>Identification and characterization of the missing pyrimidine reductase in the plant riboflavin biosynthesis pathway.</title>
        <authorList>
            <person name="Hasnain G."/>
            <person name="Frelin O."/>
            <person name="Roje S."/>
            <person name="Ellens K.W."/>
            <person name="Ali K."/>
            <person name="Guan J.C."/>
            <person name="Garrett T.J."/>
            <person name="de Crecy-Lagard V."/>
            <person name="Gregory J.F. III"/>
            <person name="McCarty D.R."/>
            <person name="Hanson A.D."/>
        </authorList>
    </citation>
    <scope>SUBCELLULAR LOCATION</scope>
</reference>
<protein>
    <recommendedName>
        <fullName>Riboflavin biosynthesis protein PYRD, chloroplastic</fullName>
    </recommendedName>
    <domain>
        <recommendedName>
            <fullName>Diaminohydroxyphosphoribosylaminopyrimidine deaminase</fullName>
            <shortName>DRAP deaminase</shortName>
            <ecNumber>3.5.4.26</ecNumber>
        </recommendedName>
        <alternativeName>
            <fullName>Riboflavin-specific deaminase</fullName>
        </alternativeName>
    </domain>
    <domain>
        <recommendedName>
            <fullName>Inactive 5-amino-6-(5-phosphoribosylamino)uracil reductase</fullName>
        </recommendedName>
        <alternativeName>
            <fullName>HTP reductase</fullName>
        </alternativeName>
    </domain>
</protein>
<accession>B6TRH4</accession>
<accession>B4FA35</accession>
<comment type="function">
    <text evidence="1">Monofunctional pyrimidine deaminase involved in the riboflavin biosynthesis pathway. Also has a reductase domain that lacks catalytically essential substrate-binding residues (By similarity).</text>
</comment>
<comment type="catalytic activity">
    <reaction>
        <text>2,5-diamino-6-hydroxy-4-(5-phosphoribosylamino)-pyrimidine + H2O + H(+) = 5-amino-6-(5-phospho-D-ribosylamino)uracil + NH4(+)</text>
        <dbReference type="Rhea" id="RHEA:21868"/>
        <dbReference type="ChEBI" id="CHEBI:15377"/>
        <dbReference type="ChEBI" id="CHEBI:15378"/>
        <dbReference type="ChEBI" id="CHEBI:28938"/>
        <dbReference type="ChEBI" id="CHEBI:58453"/>
        <dbReference type="ChEBI" id="CHEBI:58614"/>
        <dbReference type="EC" id="3.5.4.26"/>
    </reaction>
</comment>
<comment type="cofactor">
    <cofactor evidence="1">
        <name>Zn(2+)</name>
        <dbReference type="ChEBI" id="CHEBI:29105"/>
    </cofactor>
    <text evidence="1">Binds 1 zinc ion.</text>
</comment>
<comment type="pathway">
    <text>Cofactor biosynthesis; riboflavin biosynthesis; 5-amino-6-(D-ribitylamino)uracil from GTP: step 2/4.</text>
</comment>
<comment type="subcellular location">
    <subcellularLocation>
        <location evidence="4">Plastid</location>
        <location evidence="4">Chloroplast</location>
    </subcellularLocation>
</comment>
<comment type="miscellaneous">
    <text>Unlike bacteria that have a bifunctional, two-domain RibD enzyme, plants have a monofunctional reductase and a monofunctional deaminase, each having an enzymatically inactive domain.</text>
</comment>